<accession>A4Z943</accession>
<keyword id="KW-0479">Metal-binding</keyword>
<keyword id="KW-1185">Reference proteome</keyword>
<keyword id="KW-0862">Zinc</keyword>
<keyword id="KW-0863">Zinc-finger</keyword>
<sequence>MIAHFLCILSYNVNTFVILNVYTKLTMFCTTNSLPMDLLLKQGSLKQEVESFCYQIVSESHDQKVGILQSEDEHLQPSVSKNSEGELSRVKFISNSNKITTFSKKPKRRKYDESYLSFGFTYFGNRDAPHAQCVLCKKILSNSSLAPSKLRRHLETKHAAYKDKDISFFKQHLDSPENNKPPTPKIVNTDNESATEASYNVSYHIALSGEAHTIGELLIKPCAKDVVMRMFDEQYSKKIDAVQLSNSTVARRIKDLAADIEEELVCRLKICDGFSLQLDESADVSGLAVLLVFVRYRFNKSIEEDLLLCESLQSNATGEEIFNCINSFMQKHEIEWEKCVDVCSDASRAMDGKIAEAVTLIKYVAPESTSSHCLLYRHALAVKTMPTSLKNVLDQAVQIINYIKARPHQSRLLKILCEEMGAQHTALLLNTEVRWLSRGKVLVRLFELRRELLVFMDSAFRLSDCLTNSSWLLRLAYLADIFTKLNEVNLSMQGKNVTVFTVFDKMSSLLRKLEFWASSVEEENFDCFPTLSDFLTEINSTVDKNICSAIVQHLRGLRSTLLKYFPVTNDIHAWVRNPFTVTVKPASLVARDYESLIDLTSDSQVKQSFSELSLNDFWSSLIQEYPSVARRAVRVLLPFATMHLCETGFSYYAATKTKYRKRLDAAPHMRIRLSNITPNIKRICDKKTQKHCSH</sequence>
<name>ZBED5_BOVIN</name>
<reference key="1">
    <citation type="submission" date="2006-04" db="EMBL/GenBank/DDBJ databases">
        <title>Human Buster genes have insect orthologs that are autonomous transposable elements.</title>
        <authorList>
            <person name="Arensburger P."/>
            <person name="Hice R.H."/>
            <person name="Zhou L."/>
            <person name="Smith R.C."/>
            <person name="O'Brochta D.A."/>
            <person name="Craig N.L."/>
            <person name="Atkinson P.W."/>
        </authorList>
    </citation>
    <scope>NUCLEOTIDE SEQUENCE [GENOMIC DNA]</scope>
</reference>
<dbReference type="EMBL" id="DQ486150">
    <property type="protein sequence ID" value="ABF22695.1"/>
    <property type="molecule type" value="Genomic_DNA"/>
</dbReference>
<dbReference type="RefSeq" id="NP_001092858.1">
    <property type="nucleotide sequence ID" value="NM_001099388.2"/>
</dbReference>
<dbReference type="RefSeq" id="XP_005216103.1">
    <property type="nucleotide sequence ID" value="XM_005216046.5"/>
</dbReference>
<dbReference type="RefSeq" id="XP_024831227.1">
    <property type="nucleotide sequence ID" value="XM_024975459.2"/>
</dbReference>
<dbReference type="FunCoup" id="A4Z943">
    <property type="interactions" value="1535"/>
</dbReference>
<dbReference type="PaxDb" id="9913-ENSBTAP00000013974"/>
<dbReference type="Ensembl" id="ENSBTAT00000013974.7">
    <property type="protein sequence ID" value="ENSBTAP00000013974.5"/>
    <property type="gene ID" value="ENSBTAG00000010568.7"/>
</dbReference>
<dbReference type="Ensembl" id="ENSBTAT00000096827.1">
    <property type="protein sequence ID" value="ENSBTAP00000091163.1"/>
    <property type="gene ID" value="ENSBTAG00000010568.7"/>
</dbReference>
<dbReference type="Ensembl" id="ENSBTAT00000098538.1">
    <property type="protein sequence ID" value="ENSBTAP00000095721.1"/>
    <property type="gene ID" value="ENSBTAG00000010568.7"/>
</dbReference>
<dbReference type="Ensembl" id="ENSBTAT00000109087.1">
    <property type="protein sequence ID" value="ENSBTAP00000078359.1"/>
    <property type="gene ID" value="ENSBTAG00000010568.7"/>
</dbReference>
<dbReference type="GeneID" id="539898"/>
<dbReference type="KEGG" id="bta:539898"/>
<dbReference type="CTD" id="58486"/>
<dbReference type="VEuPathDB" id="HostDB:ENSBTAG00000010568"/>
<dbReference type="VGNC" id="VGNC:37054">
    <property type="gene designation" value="ZBED5"/>
</dbReference>
<dbReference type="eggNOG" id="ENOG502QT83">
    <property type="taxonomic scope" value="Eukaryota"/>
</dbReference>
<dbReference type="GeneTree" id="ENSGT00940000162521"/>
<dbReference type="HOGENOM" id="CLU_021316_5_0_1"/>
<dbReference type="InParanoid" id="A4Z943"/>
<dbReference type="OMA" id="CSKLTMF"/>
<dbReference type="OrthoDB" id="1101576at2759"/>
<dbReference type="TreeFam" id="TF328297"/>
<dbReference type="Proteomes" id="UP000009136">
    <property type="component" value="Chromosome 15"/>
</dbReference>
<dbReference type="Bgee" id="ENSBTAG00000010568">
    <property type="expression patterns" value="Expressed in gluteus medius and 106 other cell types or tissues"/>
</dbReference>
<dbReference type="GO" id="GO:0003677">
    <property type="term" value="F:DNA binding"/>
    <property type="evidence" value="ECO:0007669"/>
    <property type="project" value="InterPro"/>
</dbReference>
<dbReference type="GO" id="GO:0008270">
    <property type="term" value="F:zinc ion binding"/>
    <property type="evidence" value="ECO:0007669"/>
    <property type="project" value="UniProtKB-KW"/>
</dbReference>
<dbReference type="InterPro" id="IPR012337">
    <property type="entry name" value="RNaseH-like_sf"/>
</dbReference>
<dbReference type="InterPro" id="IPR003656">
    <property type="entry name" value="Znf_BED"/>
</dbReference>
<dbReference type="PANTHER" id="PTHR45913">
    <property type="entry name" value="EPM2A-INTERACTING PROTEIN 1"/>
    <property type="match status" value="1"/>
</dbReference>
<dbReference type="PANTHER" id="PTHR45913:SF19">
    <property type="entry name" value="LOW QUALITY PROTEIN: ZINC FINGER BED DOMAIN-CONTAINING PROTEIN 5-LIKE"/>
    <property type="match status" value="1"/>
</dbReference>
<dbReference type="Pfam" id="PF02892">
    <property type="entry name" value="zf-BED"/>
    <property type="match status" value="1"/>
</dbReference>
<dbReference type="SUPFAM" id="SSF53098">
    <property type="entry name" value="Ribonuclease H-like"/>
    <property type="match status" value="1"/>
</dbReference>
<dbReference type="PROSITE" id="PS50808">
    <property type="entry name" value="ZF_BED"/>
    <property type="match status" value="1"/>
</dbReference>
<feature type="chain" id="PRO_0000291956" description="Zinc finger BED domain-containing protein 5">
    <location>
        <begin position="1"/>
        <end position="694"/>
    </location>
</feature>
<feature type="zinc finger region" description="BED-type" evidence="1">
    <location>
        <begin position="109"/>
        <end position="165"/>
    </location>
</feature>
<feature type="binding site" evidence="1">
    <location>
        <position position="133"/>
    </location>
    <ligand>
        <name>Zn(2+)</name>
        <dbReference type="ChEBI" id="CHEBI:29105"/>
    </ligand>
</feature>
<feature type="binding site" evidence="1">
    <location>
        <position position="136"/>
    </location>
    <ligand>
        <name>Zn(2+)</name>
        <dbReference type="ChEBI" id="CHEBI:29105"/>
    </ligand>
</feature>
<feature type="binding site" evidence="1">
    <location>
        <position position="153"/>
    </location>
    <ligand>
        <name>Zn(2+)</name>
        <dbReference type="ChEBI" id="CHEBI:29105"/>
    </ligand>
</feature>
<feature type="binding site" evidence="1">
    <location>
        <position position="158"/>
    </location>
    <ligand>
        <name>Zn(2+)</name>
        <dbReference type="ChEBI" id="CHEBI:29105"/>
    </ligand>
</feature>
<proteinExistence type="predicted"/>
<organism>
    <name type="scientific">Bos taurus</name>
    <name type="common">Bovine</name>
    <dbReference type="NCBI Taxonomy" id="9913"/>
    <lineage>
        <taxon>Eukaryota</taxon>
        <taxon>Metazoa</taxon>
        <taxon>Chordata</taxon>
        <taxon>Craniata</taxon>
        <taxon>Vertebrata</taxon>
        <taxon>Euteleostomi</taxon>
        <taxon>Mammalia</taxon>
        <taxon>Eutheria</taxon>
        <taxon>Laurasiatheria</taxon>
        <taxon>Artiodactyla</taxon>
        <taxon>Ruminantia</taxon>
        <taxon>Pecora</taxon>
        <taxon>Bovidae</taxon>
        <taxon>Bovinae</taxon>
        <taxon>Bos</taxon>
    </lineage>
</organism>
<evidence type="ECO:0000255" key="1">
    <source>
        <dbReference type="PROSITE-ProRule" id="PRU00027"/>
    </source>
</evidence>
<gene>
    <name type="primary">ZBED5</name>
</gene>
<comment type="miscellaneous">
    <text>May be derived from an ancient transposon that has lost its ability to translocate.</text>
</comment>
<protein>
    <recommendedName>
        <fullName>Zinc finger BED domain-containing protein 5</fullName>
    </recommendedName>
    <alternativeName>
        <fullName>Transposon-derived Buster1 transposase-like protein</fullName>
    </alternativeName>
</protein>